<organism>
    <name type="scientific">Emericella nidulans (strain FGSC A4 / ATCC 38163 / CBS 112.46 / NRRL 194 / M139)</name>
    <name type="common">Aspergillus nidulans</name>
    <dbReference type="NCBI Taxonomy" id="227321"/>
    <lineage>
        <taxon>Eukaryota</taxon>
        <taxon>Fungi</taxon>
        <taxon>Dikarya</taxon>
        <taxon>Ascomycota</taxon>
        <taxon>Pezizomycotina</taxon>
        <taxon>Eurotiomycetes</taxon>
        <taxon>Eurotiomycetidae</taxon>
        <taxon>Eurotiales</taxon>
        <taxon>Aspergillaceae</taxon>
        <taxon>Aspergillus</taxon>
        <taxon>Aspergillus subgen. Nidulantes</taxon>
    </lineage>
</organism>
<gene>
    <name evidence="7" type="primary">easB</name>
    <name type="ORF">AN2547</name>
</gene>
<dbReference type="EC" id="2.3.1.-" evidence="9"/>
<dbReference type="EMBL" id="BN001307">
    <property type="protein sequence ID" value="CBF87072.1"/>
    <property type="molecule type" value="Genomic_DNA"/>
</dbReference>
<dbReference type="EMBL" id="AACD01000043">
    <property type="protein sequence ID" value="EAA64652.1"/>
    <property type="molecule type" value="Genomic_DNA"/>
</dbReference>
<dbReference type="RefSeq" id="XP_660151.1">
    <property type="nucleotide sequence ID" value="XM_655059.1"/>
</dbReference>
<dbReference type="SMR" id="Q5BA83"/>
<dbReference type="STRING" id="227321.Q5BA83"/>
<dbReference type="EnsemblFungi" id="CBF87072">
    <property type="protein sequence ID" value="CBF87072"/>
    <property type="gene ID" value="ANIA_02547"/>
</dbReference>
<dbReference type="KEGG" id="ani:ANIA_02547"/>
<dbReference type="eggNOG" id="KOG1202">
    <property type="taxonomic scope" value="Eukaryota"/>
</dbReference>
<dbReference type="HOGENOM" id="CLU_000022_31_1_1"/>
<dbReference type="InParanoid" id="Q5BA83"/>
<dbReference type="OMA" id="RNWIGAY"/>
<dbReference type="OrthoDB" id="329835at2759"/>
<dbReference type="Proteomes" id="UP000000560">
    <property type="component" value="Chromosome VII"/>
</dbReference>
<dbReference type="GO" id="GO:0004315">
    <property type="term" value="F:3-oxoacyl-[acyl-carrier-protein] synthase activity"/>
    <property type="evidence" value="ECO:0007669"/>
    <property type="project" value="InterPro"/>
</dbReference>
<dbReference type="GO" id="GO:0008168">
    <property type="term" value="F:methyltransferase activity"/>
    <property type="evidence" value="ECO:0007669"/>
    <property type="project" value="UniProtKB-KW"/>
</dbReference>
<dbReference type="GO" id="GO:0016491">
    <property type="term" value="F:oxidoreductase activity"/>
    <property type="evidence" value="ECO:0007669"/>
    <property type="project" value="UniProtKB-KW"/>
</dbReference>
<dbReference type="GO" id="GO:0031177">
    <property type="term" value="F:phosphopantetheine binding"/>
    <property type="evidence" value="ECO:0007669"/>
    <property type="project" value="InterPro"/>
</dbReference>
<dbReference type="GO" id="GO:1900617">
    <property type="term" value="P:emericellamide A biosynthetic process"/>
    <property type="evidence" value="ECO:0000315"/>
    <property type="project" value="GO_Central"/>
</dbReference>
<dbReference type="GO" id="GO:1900557">
    <property type="term" value="P:emericellamide biosynthetic process"/>
    <property type="evidence" value="ECO:0000315"/>
    <property type="project" value="GO_Central"/>
</dbReference>
<dbReference type="GO" id="GO:0006633">
    <property type="term" value="P:fatty acid biosynthetic process"/>
    <property type="evidence" value="ECO:0000318"/>
    <property type="project" value="GO_Central"/>
</dbReference>
<dbReference type="GO" id="GO:0032259">
    <property type="term" value="P:methylation"/>
    <property type="evidence" value="ECO:0007669"/>
    <property type="project" value="UniProtKB-KW"/>
</dbReference>
<dbReference type="CDD" id="cd02440">
    <property type="entry name" value="AdoMet_MTases"/>
    <property type="match status" value="1"/>
</dbReference>
<dbReference type="CDD" id="cd05195">
    <property type="entry name" value="enoyl_red"/>
    <property type="match status" value="1"/>
</dbReference>
<dbReference type="CDD" id="cd00833">
    <property type="entry name" value="PKS"/>
    <property type="match status" value="1"/>
</dbReference>
<dbReference type="FunFam" id="3.40.50.720:FF:000209">
    <property type="entry name" value="Polyketide synthase Pks12"/>
    <property type="match status" value="1"/>
</dbReference>
<dbReference type="Gene3D" id="3.40.47.10">
    <property type="match status" value="1"/>
</dbReference>
<dbReference type="Gene3D" id="1.10.1200.10">
    <property type="entry name" value="ACP-like"/>
    <property type="match status" value="1"/>
</dbReference>
<dbReference type="Gene3D" id="3.40.366.10">
    <property type="entry name" value="Malonyl-Coenzyme A Acyl Carrier Protein, domain 2"/>
    <property type="match status" value="1"/>
</dbReference>
<dbReference type="Gene3D" id="3.90.180.10">
    <property type="entry name" value="Medium-chain alcohol dehydrogenases, catalytic domain"/>
    <property type="match status" value="1"/>
</dbReference>
<dbReference type="Gene3D" id="3.40.50.720">
    <property type="entry name" value="NAD(P)-binding Rossmann-like Domain"/>
    <property type="match status" value="1"/>
</dbReference>
<dbReference type="Gene3D" id="3.10.129.110">
    <property type="entry name" value="Polyketide synthase dehydratase"/>
    <property type="match status" value="1"/>
</dbReference>
<dbReference type="Gene3D" id="3.40.50.150">
    <property type="entry name" value="Vaccinia Virus protein VP39"/>
    <property type="match status" value="1"/>
</dbReference>
<dbReference type="InterPro" id="IPR001227">
    <property type="entry name" value="Ac_transferase_dom_sf"/>
</dbReference>
<dbReference type="InterPro" id="IPR036736">
    <property type="entry name" value="ACP-like_sf"/>
</dbReference>
<dbReference type="InterPro" id="IPR014043">
    <property type="entry name" value="Acyl_transferase_dom"/>
</dbReference>
<dbReference type="InterPro" id="IPR016035">
    <property type="entry name" value="Acyl_Trfase/lysoPLipase"/>
</dbReference>
<dbReference type="InterPro" id="IPR013154">
    <property type="entry name" value="ADH-like_N"/>
</dbReference>
<dbReference type="InterPro" id="IPR011032">
    <property type="entry name" value="GroES-like_sf"/>
</dbReference>
<dbReference type="InterPro" id="IPR018201">
    <property type="entry name" value="Ketoacyl_synth_AS"/>
</dbReference>
<dbReference type="InterPro" id="IPR014031">
    <property type="entry name" value="Ketoacyl_synth_C"/>
</dbReference>
<dbReference type="InterPro" id="IPR014030">
    <property type="entry name" value="Ketoacyl_synth_N"/>
</dbReference>
<dbReference type="InterPro" id="IPR016036">
    <property type="entry name" value="Malonyl_transacylase_ACP-bd"/>
</dbReference>
<dbReference type="InterPro" id="IPR013217">
    <property type="entry name" value="Methyltransf_12"/>
</dbReference>
<dbReference type="InterPro" id="IPR036291">
    <property type="entry name" value="NAD(P)-bd_dom_sf"/>
</dbReference>
<dbReference type="InterPro" id="IPR032821">
    <property type="entry name" value="PKS_assoc"/>
</dbReference>
<dbReference type="InterPro" id="IPR020841">
    <property type="entry name" value="PKS_Beta-ketoAc_synthase_dom"/>
</dbReference>
<dbReference type="InterPro" id="IPR042104">
    <property type="entry name" value="PKS_dehydratase_sf"/>
</dbReference>
<dbReference type="InterPro" id="IPR020807">
    <property type="entry name" value="PKS_DH"/>
</dbReference>
<dbReference type="InterPro" id="IPR049551">
    <property type="entry name" value="PKS_DH_C"/>
</dbReference>
<dbReference type="InterPro" id="IPR049552">
    <property type="entry name" value="PKS_DH_N"/>
</dbReference>
<dbReference type="InterPro" id="IPR020843">
    <property type="entry name" value="PKS_ER"/>
</dbReference>
<dbReference type="InterPro" id="IPR013968">
    <property type="entry name" value="PKS_KR"/>
</dbReference>
<dbReference type="InterPro" id="IPR049900">
    <property type="entry name" value="PKS_mFAS_DH"/>
</dbReference>
<dbReference type="InterPro" id="IPR020806">
    <property type="entry name" value="PKS_PP-bd"/>
</dbReference>
<dbReference type="InterPro" id="IPR050444">
    <property type="entry name" value="Polyketide_Synthase"/>
</dbReference>
<dbReference type="InterPro" id="IPR009081">
    <property type="entry name" value="PP-bd_ACP"/>
</dbReference>
<dbReference type="InterPro" id="IPR006162">
    <property type="entry name" value="Ppantetheine_attach_site"/>
</dbReference>
<dbReference type="InterPro" id="IPR029063">
    <property type="entry name" value="SAM-dependent_MTases_sf"/>
</dbReference>
<dbReference type="InterPro" id="IPR016039">
    <property type="entry name" value="Thiolase-like"/>
</dbReference>
<dbReference type="PANTHER" id="PTHR45681:SF6">
    <property type="entry name" value="POLYKETIDE SYNTHASE 37"/>
    <property type="match status" value="1"/>
</dbReference>
<dbReference type="PANTHER" id="PTHR45681">
    <property type="entry name" value="POLYKETIDE SYNTHASE 44-RELATED"/>
    <property type="match status" value="1"/>
</dbReference>
<dbReference type="Pfam" id="PF23297">
    <property type="entry name" value="ACP_SdgA_C"/>
    <property type="match status" value="1"/>
</dbReference>
<dbReference type="Pfam" id="PF00698">
    <property type="entry name" value="Acyl_transf_1"/>
    <property type="match status" value="1"/>
</dbReference>
<dbReference type="Pfam" id="PF08240">
    <property type="entry name" value="ADH_N"/>
    <property type="match status" value="1"/>
</dbReference>
<dbReference type="Pfam" id="PF13602">
    <property type="entry name" value="ADH_zinc_N_2"/>
    <property type="match status" value="1"/>
</dbReference>
<dbReference type="Pfam" id="PF16197">
    <property type="entry name" value="KAsynt_C_assoc"/>
    <property type="match status" value="1"/>
</dbReference>
<dbReference type="Pfam" id="PF00109">
    <property type="entry name" value="ketoacyl-synt"/>
    <property type="match status" value="1"/>
</dbReference>
<dbReference type="Pfam" id="PF02801">
    <property type="entry name" value="Ketoacyl-synt_C"/>
    <property type="match status" value="1"/>
</dbReference>
<dbReference type="Pfam" id="PF08659">
    <property type="entry name" value="KR"/>
    <property type="match status" value="1"/>
</dbReference>
<dbReference type="Pfam" id="PF08242">
    <property type="entry name" value="Methyltransf_12"/>
    <property type="match status" value="1"/>
</dbReference>
<dbReference type="Pfam" id="PF21089">
    <property type="entry name" value="PKS_DH_N"/>
    <property type="match status" value="1"/>
</dbReference>
<dbReference type="Pfam" id="PF14765">
    <property type="entry name" value="PS-DH"/>
    <property type="match status" value="1"/>
</dbReference>
<dbReference type="SMART" id="SM00827">
    <property type="entry name" value="PKS_AT"/>
    <property type="match status" value="1"/>
</dbReference>
<dbReference type="SMART" id="SM00826">
    <property type="entry name" value="PKS_DH"/>
    <property type="match status" value="1"/>
</dbReference>
<dbReference type="SMART" id="SM00829">
    <property type="entry name" value="PKS_ER"/>
    <property type="match status" value="1"/>
</dbReference>
<dbReference type="SMART" id="SM00822">
    <property type="entry name" value="PKS_KR"/>
    <property type="match status" value="1"/>
</dbReference>
<dbReference type="SMART" id="SM00825">
    <property type="entry name" value="PKS_KS"/>
    <property type="match status" value="1"/>
</dbReference>
<dbReference type="SMART" id="SM00823">
    <property type="entry name" value="PKS_PP"/>
    <property type="match status" value="1"/>
</dbReference>
<dbReference type="SUPFAM" id="SSF47336">
    <property type="entry name" value="ACP-like"/>
    <property type="match status" value="1"/>
</dbReference>
<dbReference type="SUPFAM" id="SSF52151">
    <property type="entry name" value="FabD/lysophospholipase-like"/>
    <property type="match status" value="1"/>
</dbReference>
<dbReference type="SUPFAM" id="SSF50129">
    <property type="entry name" value="GroES-like"/>
    <property type="match status" value="1"/>
</dbReference>
<dbReference type="SUPFAM" id="SSF51735">
    <property type="entry name" value="NAD(P)-binding Rossmann-fold domains"/>
    <property type="match status" value="2"/>
</dbReference>
<dbReference type="SUPFAM" id="SSF55048">
    <property type="entry name" value="Probable ACP-binding domain of malonyl-CoA ACP transacylase"/>
    <property type="match status" value="1"/>
</dbReference>
<dbReference type="SUPFAM" id="SSF53335">
    <property type="entry name" value="S-adenosyl-L-methionine-dependent methyltransferases"/>
    <property type="match status" value="1"/>
</dbReference>
<dbReference type="SUPFAM" id="SSF53901">
    <property type="entry name" value="Thiolase-like"/>
    <property type="match status" value="1"/>
</dbReference>
<dbReference type="PROSITE" id="PS50075">
    <property type="entry name" value="CARRIER"/>
    <property type="match status" value="1"/>
</dbReference>
<dbReference type="PROSITE" id="PS00606">
    <property type="entry name" value="KS3_1"/>
    <property type="match status" value="1"/>
</dbReference>
<dbReference type="PROSITE" id="PS52004">
    <property type="entry name" value="KS3_2"/>
    <property type="match status" value="1"/>
</dbReference>
<dbReference type="PROSITE" id="PS00012">
    <property type="entry name" value="PHOSPHOPANTETHEINE"/>
    <property type="match status" value="1"/>
</dbReference>
<dbReference type="PROSITE" id="PS52019">
    <property type="entry name" value="PKS_MFAS_DH"/>
    <property type="match status" value="1"/>
</dbReference>
<protein>
    <recommendedName>
        <fullName evidence="7">Highly reducing polyketide synthase easB</fullName>
        <shortName evidence="8">HR-PKS easB</shortName>
        <ecNumber evidence="9">2.3.1.-</ecNumber>
    </recommendedName>
    <alternativeName>
        <fullName evidence="7">Emericellamide biosynthesis protein B</fullName>
    </alternativeName>
</protein>
<evidence type="ECO:0000255" key="1"/>
<evidence type="ECO:0000255" key="2">
    <source>
        <dbReference type="PROSITE-ProRule" id="PRU00258"/>
    </source>
</evidence>
<evidence type="ECO:0000255" key="3">
    <source>
        <dbReference type="PROSITE-ProRule" id="PRU01348"/>
    </source>
</evidence>
<evidence type="ECO:0000255" key="4">
    <source>
        <dbReference type="PROSITE-ProRule" id="PRU01363"/>
    </source>
</evidence>
<evidence type="ECO:0000256" key="5">
    <source>
        <dbReference type="SAM" id="MobiDB-lite"/>
    </source>
</evidence>
<evidence type="ECO:0000269" key="6">
    <source>
    </source>
</evidence>
<evidence type="ECO:0000303" key="7">
    <source>
    </source>
</evidence>
<evidence type="ECO:0000305" key="8"/>
<evidence type="ECO:0000305" key="9">
    <source>
    </source>
</evidence>
<sequence>MSPASRSRVEIADSESDSERLSSSPWSILSDNDSNTSDERSTRAGPGSLEPIAVIGIGCRLSGSATDVSGLWDMLKSGRSGWTPGPGTRFNMKAFQDPTGTRSGTTNATGGHFIREDISKFDATFFGINPVEAQAMDPQQRLMLEVAYEAFENAGITMDALWGSNTGVYVGQWASDYHEIATRDIERPPLYLVTGTGPAITSNRVSYVFNLRGPSFTVDTGCSSSLVALHQAVLSLRNRETTQCFVGGVNLLLDPQRFHYQSRLKMFSKDGRSFPFDARANGYGRGEGVTGVVLKPLSVALRDGDPVRAVIRNSVLNQDGRTPGISVPSAVAQKEAIIRAYRQAKLDLYADYVEAHGTGTKVGDPIETSAIAAALTQRRSPSRPLPIGSIKGNIGHTESAAGLAGLIKSVLMLENGMIPPQVNYETTNPDIHLEEWNLRIPTKLERQTLRRISLNSFGYGGTNAHVIIDAAHEAISAFGRLSLSRHLQLSYHSEKPRVFMVSGASEKACQRVCARLARYLVVNHRNSINPDALLARLAHTLAKQSIHAYRVIFVASELDELIKQLITASHSTITRREKFGQHRIALIFSGQGAQYAEMGRDLLKSYPSFVRSLERARQQLSRLGCTWDLLSELCRPKADSRVNEPAFSQPMCTAIQLALVDLLNEFGVSPSAVLGHSSGEIGAAYAAGALSFRDAISVSYYRGKLASELLAENQSPGAMIAVGAPPDIAEQHINKLGTDVGRMRIACFNSPSSVTVSGDVAAIDRIKEVLDTEGLFNRKLITHGAAYHSHQMKLIEDKYIAALKGLKAKPVSSSIRMFSSVTSKELDESTVLDGGYWAQNLVSPVLFSQALRTMCEQDYNGLPIDTLIEVGPHSQLSGPVNQILKTIPGPHGQASYTNTLKRGDDAETALLRCLGFLAIKNGSVRLCDLNKDSKDSDIQPLADLPPYSFDHDRSFWHETRLSRDYRHREHLPHELLGTLSADVNKLEPRWRRFVSLKETPWLRNHIIQGLITFPAAGYITMAIQAIRQHMHTANPASTIQFIRLRDVSFGKGLVLPDENAEVEISLSLRPQARTARESSGIWNEFRIFTVTPDQKWTEHCRGLVQAEVDSVEGFRSIFTPADISRIDSECTHGTIPQKFYAVGKRNGLDWQHPFNNLHQIRSSKHSCVATARVPEYEMPSGGMEDLLHPAVLDSALFHGLSTVIYLEDGRSSAYVPTFIKQLWVANRHVAPGSYLTCSTIRRNEPLVFDLHTKDEINQMAVVAQGIRVTSLGGDVAAGVSKREACHTQTLVPYVDAWTTEHRDQVCRATIELGSLMETNRALDAITIHFAQNAIREISLNDIQETHLQRYFQWMGTLADETYDNILLENKPEDLGVIGEAIAILGPHLVDILKGKTSALSLLTKNNLLSRVYTEWCSSRLYPQMSAYCHELGRFNPQLKVLEIGAGTGSATLPILKALNDCSGRFIQRYDFTDISPGFFEPAKERLGDLANVVEFRVLDAGRNAQEQGFEEGAYDLIVACNVIHATPRIDETLRNIRPLLKPGGKFMLMEISRYTLYFNIVFGLFEGWWLGYDEGRTRSPLLTDSEWCQRLEKAGFAHIEKAFVDYPHENGGSLSVFISTAPFPRRNESLPIHLLTDSNASNATEEQAQEIQQACQTSVALLPITHPCQHGGVAILLPEIAKLLCAEPDVNVWNSFKNWILKSRAVLLVSNCTMADSSHAETGLWAGFARTMRLEYPNLRQVVLDIQTPNVPVMSKLKEVLPIILNSSSFDLDCLSSEVENEFTEKDGQLFVSRYAYRPDISRDVDLTSRQAASEPVPFVSTGRILTAELGVPGLLETIRWKDDIECPPLGPDDVRFELRGASINFKDVLIAAGQLEGITEMRNDCSGVVVEVGENMKHRFKPGDRVCALYSRSYTNYPLVHGDCCQVIPDSLSFAEGASLPIVWATVYYGLVDKGSLSKGEKILIHSAAGAVGQAAIMLAQHLGAEVFATVGSEAKRDLLHAKYGVPYDHIFSSRTTAFYGEIMKSTGGYGVDVVLNSLSGEMFRESCNLMASFGRFVEIGRKDLMDDALMPMEFLLRNITFSYVDLTAIIEQRKPLARRLLHDIADLAASGSIRPVTLTTMPISDIEIAFRQIQAGKHTGKIVLTVEENQEVPAVPSMPKQARLHEDASYIVVGGLGGLGRWLTTWLADHGAKHIVALSRSGAKDADSRTFISNIRGRGVNLIAPPCDVVCADAVVALAQELKRSELPPVRGVINSAMVLRDTLFDNMTEDDWRTALASKVRGSQNLHTTFKSLDFFVMMSSIVAVRGNYGQSNYSAACSFQDTFVRHMVQQGEPAFSINIGPIRDVGYVSENPEVAEALRRNGLGSIGVSDVLIVLNHAILNARGANPSTCVASIGLIASDDESENGRDFLMTDRRFSQLVKHNGSKQKSAGEALDAITLLSAATQLDEAVHIVTNAILNQLSKLIVTPVEMLSPAQSLDSYGVDSLVAVELRNWIGAYLHANVQLMVIRGTGSISQLAAIVAKESRVVKL</sequence>
<feature type="chain" id="PRO_0000438970" description="Highly reducing polyketide synthase easB">
    <location>
        <begin position="1"/>
        <end position="2534"/>
    </location>
</feature>
<feature type="domain" description="Ketosynthase family 3 (KS3)" evidence="3 9">
    <location>
        <begin position="49"/>
        <end position="470"/>
    </location>
</feature>
<feature type="domain" description="PKS/mFAS DH" evidence="4">
    <location>
        <begin position="973"/>
        <end position="1277"/>
    </location>
</feature>
<feature type="domain" description="Carrier" evidence="2 9">
    <location>
        <begin position="2452"/>
        <end position="2529"/>
    </location>
</feature>
<feature type="region of interest" description="Disordered" evidence="5">
    <location>
        <begin position="1"/>
        <end position="49"/>
    </location>
</feature>
<feature type="region of interest" description="Malonyl-CoA:ACP transacylase (MAT) domain" evidence="1 9">
    <location>
        <begin position="587"/>
        <end position="885"/>
    </location>
</feature>
<feature type="region of interest" description="Dehydratase (DH) domain" evidence="1 9">
    <location>
        <begin position="973"/>
        <end position="1273"/>
    </location>
</feature>
<feature type="region of interest" description="N-terminal hotdog fold" evidence="4">
    <location>
        <begin position="973"/>
        <end position="1111"/>
    </location>
</feature>
<feature type="region of interest" description="C-terminal hotdog fold" evidence="4">
    <location>
        <begin position="1131"/>
        <end position="1277"/>
    </location>
</feature>
<feature type="region of interest" description="Methyltransferase (CMet) domain" evidence="1 9">
    <location>
        <begin position="1395"/>
        <end position="1625"/>
    </location>
</feature>
<feature type="region of interest" description="Enoyl reductase (ER) domain" evidence="1 9">
    <location>
        <begin position="1834"/>
        <end position="2146"/>
    </location>
</feature>
<feature type="region of interest" description="Ketoreductase (KR) domain" evidence="1 9">
    <location>
        <begin position="2453"/>
        <end position="2526"/>
    </location>
</feature>
<feature type="active site" description="For beta-ketoacyl synthase activity" evidence="3">
    <location>
        <position position="222"/>
    </location>
</feature>
<feature type="active site" description="For beta-ketoacyl synthase activity" evidence="3">
    <location>
        <position position="356"/>
    </location>
</feature>
<feature type="active site" description="For beta-ketoacyl synthase activity" evidence="3">
    <location>
        <position position="396"/>
    </location>
</feature>
<feature type="active site" description="Proton acceptor; for dehydratase activity" evidence="4">
    <location>
        <position position="1005"/>
    </location>
</feature>
<feature type="active site" description="Proton donor; for dehydratase activity" evidence="4">
    <location>
        <position position="1193"/>
    </location>
</feature>
<feature type="modified residue" description="O-(pantetheine 4'-phosphoryl)serine" evidence="2">
    <location>
        <position position="2489"/>
    </location>
</feature>
<proteinExistence type="inferred from homology"/>
<name>EASB_EMENI</name>
<comment type="function">
    <text evidence="6">Polyketide synthase; part of the gene cluster that mediates the biosynthesis of emericellamides, secondary metabolites acting as antibiotics (PubMed:18559263). The biosynthesis of emericellamides initiates from the highly reducing polyketide synthase easB which catalyzes the formation of the linear polyketide chain (PubMed:18559263). EasB produces several polyketides that can be further processed by the downstream enzymes (PubMed:18559263). The polyketides are released from easB as linear polyketide carboxylic acids, which are converted to CoA thioesters by the acyl-CoA ligase easD (PubMed:18559263). The substrates are then loaded onto the acyltransferase easC, which shuttles them to the first thiolation (T) domain of the nonribosomal peptide synthetase easA (PubMed:18559263). EasA then performs condensation of the polyketides with one glycine, two alanine, one valine and one leucine residues (PubMed:18559263). A last step of cyclization leads to the production of emericellamides (PubMed:18559263).</text>
</comment>
<comment type="pathway">
    <text evidence="6">Antibiotic biosynthesis.</text>
</comment>
<comment type="disruption phenotype">
    <text evidence="6">Impairs the production of emerecellamide A, C, D, E and F (PubMed:18559263).</text>
</comment>
<keyword id="KW-0012">Acyltransferase</keyword>
<keyword id="KW-0489">Methyltransferase</keyword>
<keyword id="KW-0511">Multifunctional enzyme</keyword>
<keyword id="KW-0521">NADP</keyword>
<keyword id="KW-0560">Oxidoreductase</keyword>
<keyword id="KW-0596">Phosphopantetheine</keyword>
<keyword id="KW-0597">Phosphoprotein</keyword>
<keyword id="KW-1185">Reference proteome</keyword>
<keyword id="KW-0808">Transferase</keyword>
<accession>Q5BA83</accession>
<accession>C8VPT1</accession>
<reference key="1">
    <citation type="journal article" date="2005" name="Nature">
        <title>Sequencing of Aspergillus nidulans and comparative analysis with A. fumigatus and A. oryzae.</title>
        <authorList>
            <person name="Galagan J.E."/>
            <person name="Calvo S.E."/>
            <person name="Cuomo C."/>
            <person name="Ma L.-J."/>
            <person name="Wortman J.R."/>
            <person name="Batzoglou S."/>
            <person name="Lee S.-I."/>
            <person name="Bastuerkmen M."/>
            <person name="Spevak C.C."/>
            <person name="Clutterbuck J."/>
            <person name="Kapitonov V."/>
            <person name="Jurka J."/>
            <person name="Scazzocchio C."/>
            <person name="Farman M.L."/>
            <person name="Butler J."/>
            <person name="Purcell S."/>
            <person name="Harris S."/>
            <person name="Braus G.H."/>
            <person name="Draht O."/>
            <person name="Busch S."/>
            <person name="D'Enfert C."/>
            <person name="Bouchier C."/>
            <person name="Goldman G.H."/>
            <person name="Bell-Pedersen D."/>
            <person name="Griffiths-Jones S."/>
            <person name="Doonan J.H."/>
            <person name="Yu J."/>
            <person name="Vienken K."/>
            <person name="Pain A."/>
            <person name="Freitag M."/>
            <person name="Selker E.U."/>
            <person name="Archer D.B."/>
            <person name="Penalva M.A."/>
            <person name="Oakley B.R."/>
            <person name="Momany M."/>
            <person name="Tanaka T."/>
            <person name="Kumagai T."/>
            <person name="Asai K."/>
            <person name="Machida M."/>
            <person name="Nierman W.C."/>
            <person name="Denning D.W."/>
            <person name="Caddick M.X."/>
            <person name="Hynes M."/>
            <person name="Paoletti M."/>
            <person name="Fischer R."/>
            <person name="Miller B.L."/>
            <person name="Dyer P.S."/>
            <person name="Sachs M.S."/>
            <person name="Osmani S.A."/>
            <person name="Birren B.W."/>
        </authorList>
    </citation>
    <scope>NUCLEOTIDE SEQUENCE [LARGE SCALE GENOMIC DNA]</scope>
    <source>
        <strain>FGSC A4 / ATCC 38163 / CBS 112.46 / NRRL 194 / M139</strain>
    </source>
</reference>
<reference key="2">
    <citation type="journal article" date="2009" name="Fungal Genet. Biol.">
        <title>The 2008 update of the Aspergillus nidulans genome annotation: a community effort.</title>
        <authorList>
            <person name="Wortman J.R."/>
            <person name="Gilsenan J.M."/>
            <person name="Joardar V."/>
            <person name="Deegan J."/>
            <person name="Clutterbuck J."/>
            <person name="Andersen M.R."/>
            <person name="Archer D."/>
            <person name="Bencina M."/>
            <person name="Braus G."/>
            <person name="Coutinho P."/>
            <person name="von Dohren H."/>
            <person name="Doonan J."/>
            <person name="Driessen A.J."/>
            <person name="Durek P."/>
            <person name="Espeso E."/>
            <person name="Fekete E."/>
            <person name="Flipphi M."/>
            <person name="Estrada C.G."/>
            <person name="Geysens S."/>
            <person name="Goldman G."/>
            <person name="de Groot P.W."/>
            <person name="Hansen K."/>
            <person name="Harris S.D."/>
            <person name="Heinekamp T."/>
            <person name="Helmstaedt K."/>
            <person name="Henrissat B."/>
            <person name="Hofmann G."/>
            <person name="Homan T."/>
            <person name="Horio T."/>
            <person name="Horiuchi H."/>
            <person name="James S."/>
            <person name="Jones M."/>
            <person name="Karaffa L."/>
            <person name="Karanyi Z."/>
            <person name="Kato M."/>
            <person name="Keller N."/>
            <person name="Kelly D.E."/>
            <person name="Kiel J.A."/>
            <person name="Kim J.M."/>
            <person name="van der Klei I.J."/>
            <person name="Klis F.M."/>
            <person name="Kovalchuk A."/>
            <person name="Krasevec N."/>
            <person name="Kubicek C.P."/>
            <person name="Liu B."/>
            <person name="Maccabe A."/>
            <person name="Meyer V."/>
            <person name="Mirabito P."/>
            <person name="Miskei M."/>
            <person name="Mos M."/>
            <person name="Mullins J."/>
            <person name="Nelson D.R."/>
            <person name="Nielsen J."/>
            <person name="Oakley B.R."/>
            <person name="Osmani S.A."/>
            <person name="Pakula T."/>
            <person name="Paszewski A."/>
            <person name="Paulsen I."/>
            <person name="Pilsyk S."/>
            <person name="Pocsi I."/>
            <person name="Punt P.J."/>
            <person name="Ram A.F."/>
            <person name="Ren Q."/>
            <person name="Robellet X."/>
            <person name="Robson G."/>
            <person name="Seiboth B."/>
            <person name="van Solingen P."/>
            <person name="Specht T."/>
            <person name="Sun J."/>
            <person name="Taheri-Talesh N."/>
            <person name="Takeshita N."/>
            <person name="Ussery D."/>
            <person name="vanKuyk P.A."/>
            <person name="Visser H."/>
            <person name="van de Vondervoort P.J."/>
            <person name="de Vries R.P."/>
            <person name="Walton J."/>
            <person name="Xiang X."/>
            <person name="Xiong Y."/>
            <person name="Zeng A.P."/>
            <person name="Brandt B.W."/>
            <person name="Cornell M.J."/>
            <person name="van den Hondel C.A."/>
            <person name="Visser J."/>
            <person name="Oliver S.G."/>
            <person name="Turner G."/>
        </authorList>
    </citation>
    <scope>GENOME REANNOTATION</scope>
    <source>
        <strain>FGSC A4 / ATCC 38163 / CBS 112.46 / NRRL 194 / M139</strain>
    </source>
</reference>
<reference key="3">
    <citation type="journal article" date="2008" name="Chem. Biol.">
        <title>Molecular genetic mining of the Aspergillus secondary metabolome: discovery of the emericellamide biosynthetic pathway.</title>
        <authorList>
            <person name="Chiang Y.M."/>
            <person name="Szewczyk E."/>
            <person name="Nayak T."/>
            <person name="Davidson A.D."/>
            <person name="Sanchez J.F."/>
            <person name="Lo H.C."/>
            <person name="Ho W.Y."/>
            <person name="Simityan H."/>
            <person name="Kuo E."/>
            <person name="Praseuth A."/>
            <person name="Watanabe K."/>
            <person name="Oakley B.R."/>
            <person name="Wang C.C."/>
        </authorList>
    </citation>
    <scope>FUNCTION</scope>
    <scope>DOMAIN</scope>
    <scope>DISRUPTION PHENOTYPE</scope>
</reference>